<comment type="function">
    <text evidence="1">ATPase subunit of a proteasome-like degradation complex; this subunit has chaperone activity. The binding of ATP and its subsequent hydrolysis by HslU are essential for unfolding of protein substrates subsequently hydrolyzed by HslV. HslU recognizes the N-terminal part of its protein substrates and unfolds these before they are guided to HslV for hydrolysis.</text>
</comment>
<comment type="subunit">
    <text evidence="1">A double ring-shaped homohexamer of HslV is capped on each side by a ring-shaped HslU homohexamer. The assembly of the HslU/HslV complex is dependent on binding of ATP.</text>
</comment>
<comment type="subcellular location">
    <subcellularLocation>
        <location evidence="1">Cytoplasm</location>
    </subcellularLocation>
</comment>
<comment type="similarity">
    <text evidence="1">Belongs to the ClpX chaperone family. HslU subfamily.</text>
</comment>
<reference key="1">
    <citation type="submission" date="2005-08" db="EMBL/GenBank/DDBJ databases">
        <title>Complete sequence of chromosome 1 of Nitrosospira multiformis ATCC 25196.</title>
        <authorList>
            <person name="Copeland A."/>
            <person name="Lucas S."/>
            <person name="Lapidus A."/>
            <person name="Barry K."/>
            <person name="Detter J.C."/>
            <person name="Glavina T."/>
            <person name="Hammon N."/>
            <person name="Israni S."/>
            <person name="Pitluck S."/>
            <person name="Chain P."/>
            <person name="Malfatti S."/>
            <person name="Shin M."/>
            <person name="Vergez L."/>
            <person name="Schmutz J."/>
            <person name="Larimer F."/>
            <person name="Land M."/>
            <person name="Hauser L."/>
            <person name="Kyrpides N."/>
            <person name="Lykidis A."/>
            <person name="Richardson P."/>
        </authorList>
    </citation>
    <scope>NUCLEOTIDE SEQUENCE [LARGE SCALE GENOMIC DNA]</scope>
    <source>
        <strain>ATCC 25196 / NCIMB 11849 / C 71</strain>
    </source>
</reference>
<name>HSLU_NITMU</name>
<evidence type="ECO:0000255" key="1">
    <source>
        <dbReference type="HAMAP-Rule" id="MF_00249"/>
    </source>
</evidence>
<dbReference type="EMBL" id="CP000103">
    <property type="protein sequence ID" value="ABB75835.1"/>
    <property type="molecule type" value="Genomic_DNA"/>
</dbReference>
<dbReference type="RefSeq" id="WP_011381834.1">
    <property type="nucleotide sequence ID" value="NC_007614.1"/>
</dbReference>
<dbReference type="SMR" id="Q2Y5Y6"/>
<dbReference type="STRING" id="323848.Nmul_A2546"/>
<dbReference type="KEGG" id="nmu:Nmul_A2546"/>
<dbReference type="eggNOG" id="COG1220">
    <property type="taxonomic scope" value="Bacteria"/>
</dbReference>
<dbReference type="HOGENOM" id="CLU_033123_0_0_4"/>
<dbReference type="OrthoDB" id="9804062at2"/>
<dbReference type="Proteomes" id="UP000002718">
    <property type="component" value="Chromosome"/>
</dbReference>
<dbReference type="GO" id="GO:0009376">
    <property type="term" value="C:HslUV protease complex"/>
    <property type="evidence" value="ECO:0007669"/>
    <property type="project" value="UniProtKB-UniRule"/>
</dbReference>
<dbReference type="GO" id="GO:0005524">
    <property type="term" value="F:ATP binding"/>
    <property type="evidence" value="ECO:0007669"/>
    <property type="project" value="UniProtKB-UniRule"/>
</dbReference>
<dbReference type="GO" id="GO:0016887">
    <property type="term" value="F:ATP hydrolysis activity"/>
    <property type="evidence" value="ECO:0007669"/>
    <property type="project" value="InterPro"/>
</dbReference>
<dbReference type="GO" id="GO:0008233">
    <property type="term" value="F:peptidase activity"/>
    <property type="evidence" value="ECO:0007669"/>
    <property type="project" value="InterPro"/>
</dbReference>
<dbReference type="GO" id="GO:0036402">
    <property type="term" value="F:proteasome-activating activity"/>
    <property type="evidence" value="ECO:0007669"/>
    <property type="project" value="UniProtKB-UniRule"/>
</dbReference>
<dbReference type="GO" id="GO:0043335">
    <property type="term" value="P:protein unfolding"/>
    <property type="evidence" value="ECO:0007669"/>
    <property type="project" value="UniProtKB-UniRule"/>
</dbReference>
<dbReference type="GO" id="GO:0051603">
    <property type="term" value="P:proteolysis involved in protein catabolic process"/>
    <property type="evidence" value="ECO:0007669"/>
    <property type="project" value="TreeGrafter"/>
</dbReference>
<dbReference type="CDD" id="cd19498">
    <property type="entry name" value="RecA-like_HslU"/>
    <property type="match status" value="1"/>
</dbReference>
<dbReference type="FunFam" id="1.10.8.10:FF:000028">
    <property type="entry name" value="ATP-dependent protease ATPase subunit HslU"/>
    <property type="match status" value="1"/>
</dbReference>
<dbReference type="FunFam" id="3.40.50.300:FF:000213">
    <property type="entry name" value="ATP-dependent protease ATPase subunit HslU"/>
    <property type="match status" value="1"/>
</dbReference>
<dbReference type="FunFam" id="3.40.50.300:FF:000220">
    <property type="entry name" value="ATP-dependent protease ATPase subunit HslU"/>
    <property type="match status" value="1"/>
</dbReference>
<dbReference type="Gene3D" id="1.10.8.60">
    <property type="match status" value="1"/>
</dbReference>
<dbReference type="Gene3D" id="1.10.8.10">
    <property type="entry name" value="DNA helicase RuvA subunit, C-terminal domain"/>
    <property type="match status" value="1"/>
</dbReference>
<dbReference type="Gene3D" id="3.40.50.300">
    <property type="entry name" value="P-loop containing nucleotide triphosphate hydrolases"/>
    <property type="match status" value="2"/>
</dbReference>
<dbReference type="HAMAP" id="MF_00249">
    <property type="entry name" value="HslU"/>
    <property type="match status" value="1"/>
</dbReference>
<dbReference type="InterPro" id="IPR003593">
    <property type="entry name" value="AAA+_ATPase"/>
</dbReference>
<dbReference type="InterPro" id="IPR050052">
    <property type="entry name" value="ATP-dep_Clp_protease_ClpX"/>
</dbReference>
<dbReference type="InterPro" id="IPR003959">
    <property type="entry name" value="ATPase_AAA_core"/>
</dbReference>
<dbReference type="InterPro" id="IPR019489">
    <property type="entry name" value="Clp_ATPase_C"/>
</dbReference>
<dbReference type="InterPro" id="IPR004491">
    <property type="entry name" value="HslU"/>
</dbReference>
<dbReference type="InterPro" id="IPR027417">
    <property type="entry name" value="P-loop_NTPase"/>
</dbReference>
<dbReference type="NCBIfam" id="TIGR00390">
    <property type="entry name" value="hslU"/>
    <property type="match status" value="1"/>
</dbReference>
<dbReference type="NCBIfam" id="NF003544">
    <property type="entry name" value="PRK05201.1"/>
    <property type="match status" value="1"/>
</dbReference>
<dbReference type="PANTHER" id="PTHR48102">
    <property type="entry name" value="ATP-DEPENDENT CLP PROTEASE ATP-BINDING SUBUNIT CLPX-LIKE, MITOCHONDRIAL-RELATED"/>
    <property type="match status" value="1"/>
</dbReference>
<dbReference type="PANTHER" id="PTHR48102:SF3">
    <property type="entry name" value="ATP-DEPENDENT PROTEASE ATPASE SUBUNIT HSLU"/>
    <property type="match status" value="1"/>
</dbReference>
<dbReference type="Pfam" id="PF00004">
    <property type="entry name" value="AAA"/>
    <property type="match status" value="1"/>
</dbReference>
<dbReference type="Pfam" id="PF07724">
    <property type="entry name" value="AAA_2"/>
    <property type="match status" value="1"/>
</dbReference>
<dbReference type="SMART" id="SM00382">
    <property type="entry name" value="AAA"/>
    <property type="match status" value="1"/>
</dbReference>
<dbReference type="SMART" id="SM01086">
    <property type="entry name" value="ClpB_D2-small"/>
    <property type="match status" value="1"/>
</dbReference>
<dbReference type="SUPFAM" id="SSF52540">
    <property type="entry name" value="P-loop containing nucleoside triphosphate hydrolases"/>
    <property type="match status" value="1"/>
</dbReference>
<protein>
    <recommendedName>
        <fullName evidence="1">ATP-dependent protease ATPase subunit HslU</fullName>
    </recommendedName>
    <alternativeName>
        <fullName evidence="1">Unfoldase HslU</fullName>
    </alternativeName>
</protein>
<feature type="chain" id="PRO_1000012764" description="ATP-dependent protease ATPase subunit HslU">
    <location>
        <begin position="1"/>
        <end position="443"/>
    </location>
</feature>
<feature type="binding site" evidence="1">
    <location>
        <position position="18"/>
    </location>
    <ligand>
        <name>ATP</name>
        <dbReference type="ChEBI" id="CHEBI:30616"/>
    </ligand>
</feature>
<feature type="binding site" evidence="1">
    <location>
        <begin position="60"/>
        <end position="65"/>
    </location>
    <ligand>
        <name>ATP</name>
        <dbReference type="ChEBI" id="CHEBI:30616"/>
    </ligand>
</feature>
<feature type="binding site" evidence="1">
    <location>
        <position position="256"/>
    </location>
    <ligand>
        <name>ATP</name>
        <dbReference type="ChEBI" id="CHEBI:30616"/>
    </ligand>
</feature>
<feature type="binding site" evidence="1">
    <location>
        <position position="321"/>
    </location>
    <ligand>
        <name>ATP</name>
        <dbReference type="ChEBI" id="CHEBI:30616"/>
    </ligand>
</feature>
<feature type="binding site" evidence="1">
    <location>
        <position position="393"/>
    </location>
    <ligand>
        <name>ATP</name>
        <dbReference type="ChEBI" id="CHEBI:30616"/>
    </ligand>
</feature>
<sequence>MSQLTPREIVHELDKHIIGQDAAKRSVAIALRNRWRRQQVQDPLRQEITPKNILMIGPTGVGKTEIARRLAKLADAPFIKVEATKFTEVGYVGRDVDSIIRDLVEAAVKQSRERETQKMRARAEDHAEERILDVLLPVARETGLQMDSIEAESATRQKFRKKLREGELNDKEIEIELATPHTHMEIFAPPGMEELTTQIQGMFQNLGAERKRMRKLKIREAMKLLIDEEASKLVNDEELKLRAVQNVEQNGIVFLDEIDKITSRSETSGADVSRQGVQRDLLPLVEGTTISTKYGMIKTDHILFIASGAFHLAKPSDLIPELQGRFPIRVELTSLSAGDFVQILTNTDACLKRQYEALLETEGVRLEFTPDAVKRLAEIAFAVNEKTENIGARRLYTAMEKLLEDVSFDAEKHHGDAVVIDAAYVDKRLGDLAQSEDLARYVL</sequence>
<proteinExistence type="inferred from homology"/>
<gene>
    <name evidence="1" type="primary">hslU</name>
    <name type="ordered locus">Nmul_A2546</name>
</gene>
<organism>
    <name type="scientific">Nitrosospira multiformis (strain ATCC 25196 / NCIMB 11849 / C 71)</name>
    <dbReference type="NCBI Taxonomy" id="323848"/>
    <lineage>
        <taxon>Bacteria</taxon>
        <taxon>Pseudomonadati</taxon>
        <taxon>Pseudomonadota</taxon>
        <taxon>Betaproteobacteria</taxon>
        <taxon>Nitrosomonadales</taxon>
        <taxon>Nitrosomonadaceae</taxon>
        <taxon>Nitrosospira</taxon>
    </lineage>
</organism>
<keyword id="KW-0067">ATP-binding</keyword>
<keyword id="KW-0143">Chaperone</keyword>
<keyword id="KW-0963">Cytoplasm</keyword>
<keyword id="KW-0547">Nucleotide-binding</keyword>
<keyword id="KW-1185">Reference proteome</keyword>
<keyword id="KW-0346">Stress response</keyword>
<accession>Q2Y5Y6</accession>